<evidence type="ECO:0000250" key="1">
    <source>
        <dbReference type="UniProtKB" id="K7IM66"/>
    </source>
</evidence>
<evidence type="ECO:0000255" key="2">
    <source>
        <dbReference type="HAMAP-Rule" id="MF_03003"/>
    </source>
</evidence>
<evidence type="ECO:0000256" key="3">
    <source>
        <dbReference type="SAM" id="MobiDB-lite"/>
    </source>
</evidence>
<evidence type="ECO:0000269" key="4">
    <source>
    </source>
</evidence>
<evidence type="ECO:0000269" key="5">
    <source>
    </source>
</evidence>
<evidence type="ECO:0000269" key="6">
    <source>
    </source>
</evidence>
<evidence type="ECO:0000305" key="7"/>
<proteinExistence type="evidence at protein level"/>
<comment type="function">
    <text evidence="2 4">mRNA cap-binding component of the eukaryotic translation initiation factor 3 (eIF-3) complex, which is involved in protein synthesis of a specialized repertoire of mRNAs and, together with other initiation factors, stimulates binding of mRNA and methionyl-tRNAi to the 40S ribosome. The eIF-3 complex specifically targets and initiates translation of a subset of mRNAs involved in cell proliferation. In the eIF-3 complex, eif3d specifically recognizes and binds the 7-methylguanosine cap of a subset of mRNAs.</text>
</comment>
<comment type="subunit">
    <text evidence="2 5">Component of the eukaryotic translation initiation factor 3 (eIF-3) complex. The eIF-3 complex appears to include tif32/eif3a, SPAC25G10.08/eif3b, tif33/eif3c, SPBC4C3.07/eif3f, tif35/eif3g and sum1/eif3i. This set of common subunits may also associate exclusively with either moe1/eif3d and int6/eif3e, or with SPAC821.05/eif3h and SPAC1751.03/eif3m. The eIF-3 complex may also include SPAC3A12.13c/eif3j.</text>
</comment>
<comment type="subcellular location">
    <subcellularLocation>
        <location evidence="2 6">Cytoplasm</location>
    </subcellularLocation>
</comment>
<comment type="domain">
    <text evidence="2">The RNA gate region regulates mRNA cap recognition to prevent promiscuous mRNA-binding before assembly of eif3d into the full eukaryotic translation initiation factor 3 (eIF-3) complex.</text>
</comment>
<comment type="disruption phenotype">
    <text evidence="4">Reduced rate of protein synthesis, although the polyribosome content is not affected. Enhanced sensitivity to caffeine and defective spore formation.</text>
</comment>
<comment type="similarity">
    <text evidence="2">Belongs to the eIF-3 subunit D family.</text>
</comment>
<reference key="1">
    <citation type="journal article" date="1999" name="Proc. Natl. Acad. Sci. U.S.A.">
        <title>Moe1, a conserved protein in Schizosaccharomyces pombe, interacts with a Ras effector, Scd1, to affect proper spindle formation.</title>
        <authorList>
            <person name="Chen C.-R."/>
            <person name="Li Y.-C."/>
            <person name="Chen J."/>
            <person name="Hou M.-C."/>
            <person name="Papadaki P."/>
            <person name="Chang E.C."/>
        </authorList>
    </citation>
    <scope>NUCLEOTIDE SEQUENCE [GENOMIC DNA]</scope>
    <scope>INTERACTION WITH SCD1</scope>
    <scope>SUBCELLULAR LOCATION</scope>
</reference>
<reference key="2">
    <citation type="journal article" date="2002" name="Nature">
        <title>The genome sequence of Schizosaccharomyces pombe.</title>
        <authorList>
            <person name="Wood V."/>
            <person name="Gwilliam R."/>
            <person name="Rajandream M.A."/>
            <person name="Lyne M.H."/>
            <person name="Lyne R."/>
            <person name="Stewart A."/>
            <person name="Sgouros J.G."/>
            <person name="Peat N."/>
            <person name="Hayles J."/>
            <person name="Baker S.G."/>
            <person name="Basham D."/>
            <person name="Bowman S."/>
            <person name="Brooks K."/>
            <person name="Brown D."/>
            <person name="Brown S."/>
            <person name="Chillingworth T."/>
            <person name="Churcher C.M."/>
            <person name="Collins M."/>
            <person name="Connor R."/>
            <person name="Cronin A."/>
            <person name="Davis P."/>
            <person name="Feltwell T."/>
            <person name="Fraser A."/>
            <person name="Gentles S."/>
            <person name="Goble A."/>
            <person name="Hamlin N."/>
            <person name="Harris D.E."/>
            <person name="Hidalgo J."/>
            <person name="Hodgson G."/>
            <person name="Holroyd S."/>
            <person name="Hornsby T."/>
            <person name="Howarth S."/>
            <person name="Huckle E.J."/>
            <person name="Hunt S."/>
            <person name="Jagels K."/>
            <person name="James K.D."/>
            <person name="Jones L."/>
            <person name="Jones M."/>
            <person name="Leather S."/>
            <person name="McDonald S."/>
            <person name="McLean J."/>
            <person name="Mooney P."/>
            <person name="Moule S."/>
            <person name="Mungall K.L."/>
            <person name="Murphy L.D."/>
            <person name="Niblett D."/>
            <person name="Odell C."/>
            <person name="Oliver K."/>
            <person name="O'Neil S."/>
            <person name="Pearson D."/>
            <person name="Quail M.A."/>
            <person name="Rabbinowitsch E."/>
            <person name="Rutherford K.M."/>
            <person name="Rutter S."/>
            <person name="Saunders D."/>
            <person name="Seeger K."/>
            <person name="Sharp S."/>
            <person name="Skelton J."/>
            <person name="Simmonds M.N."/>
            <person name="Squares R."/>
            <person name="Squares S."/>
            <person name="Stevens K."/>
            <person name="Taylor K."/>
            <person name="Taylor R.G."/>
            <person name="Tivey A."/>
            <person name="Walsh S.V."/>
            <person name="Warren T."/>
            <person name="Whitehead S."/>
            <person name="Woodward J.R."/>
            <person name="Volckaert G."/>
            <person name="Aert R."/>
            <person name="Robben J."/>
            <person name="Grymonprez B."/>
            <person name="Weltjens I."/>
            <person name="Vanstreels E."/>
            <person name="Rieger M."/>
            <person name="Schaefer M."/>
            <person name="Mueller-Auer S."/>
            <person name="Gabel C."/>
            <person name="Fuchs M."/>
            <person name="Duesterhoeft A."/>
            <person name="Fritzc C."/>
            <person name="Holzer E."/>
            <person name="Moestl D."/>
            <person name="Hilbert H."/>
            <person name="Borzym K."/>
            <person name="Langer I."/>
            <person name="Beck A."/>
            <person name="Lehrach H."/>
            <person name="Reinhardt R."/>
            <person name="Pohl T.M."/>
            <person name="Eger P."/>
            <person name="Zimmermann W."/>
            <person name="Wedler H."/>
            <person name="Wambutt R."/>
            <person name="Purnelle B."/>
            <person name="Goffeau A."/>
            <person name="Cadieu E."/>
            <person name="Dreano S."/>
            <person name="Gloux S."/>
            <person name="Lelaure V."/>
            <person name="Mottier S."/>
            <person name="Galibert F."/>
            <person name="Aves S.J."/>
            <person name="Xiang Z."/>
            <person name="Hunt C."/>
            <person name="Moore K."/>
            <person name="Hurst S.M."/>
            <person name="Lucas M."/>
            <person name="Rochet M."/>
            <person name="Gaillardin C."/>
            <person name="Tallada V.A."/>
            <person name="Garzon A."/>
            <person name="Thode G."/>
            <person name="Daga R.R."/>
            <person name="Cruzado L."/>
            <person name="Jimenez J."/>
            <person name="Sanchez M."/>
            <person name="del Rey F."/>
            <person name="Benito J."/>
            <person name="Dominguez A."/>
            <person name="Revuelta J.L."/>
            <person name="Moreno S."/>
            <person name="Armstrong J."/>
            <person name="Forsburg S.L."/>
            <person name="Cerutti L."/>
            <person name="Lowe T."/>
            <person name="McCombie W.R."/>
            <person name="Paulsen I."/>
            <person name="Potashkin J."/>
            <person name="Shpakovski G.V."/>
            <person name="Ussery D."/>
            <person name="Barrell B.G."/>
            <person name="Nurse P."/>
        </authorList>
    </citation>
    <scope>NUCLEOTIDE SEQUENCE [LARGE SCALE GENOMIC DNA]</scope>
    <source>
        <strain>972 / ATCC 24843</strain>
    </source>
</reference>
<reference key="3">
    <citation type="journal article" date="2002" name="J. Biol. Chem.">
        <title>Moe1 and spInt6, the fission yeast homologues of mammalian translation initiation factor 3 subunits p66 (eIF3d) and p48 (eIF3e), respectively, are required for stable association of eIF3 subunits.</title>
        <authorList>
            <person name="Bandyopadhyay A."/>
            <person name="Lakshmanan V."/>
            <person name="Matsumoto T."/>
            <person name="Chang E.C."/>
            <person name="Maitra U."/>
        </authorList>
    </citation>
    <scope>FUNCTION</scope>
    <scope>INTERACTION WITH SUM1</scope>
    <scope>ASSOCIATION WITH THE 40S RIBOSOMAL SUBUNIT</scope>
    <scope>DISRUPTION PHENOTYPE</scope>
</reference>
<reference key="4">
    <citation type="journal article" date="2005" name="BMC Biol.">
        <title>PCI proteins eIF3e and eIF3m define distinct translation initiation factor 3 complexes.</title>
        <authorList>
            <person name="Zhou C."/>
            <person name="Arslan F."/>
            <person name="Wee S."/>
            <person name="Krishnan S."/>
            <person name="Ivanov A.R."/>
            <person name="Oliva A."/>
            <person name="Leatherwood J."/>
            <person name="Wolf D.A."/>
        </authorList>
    </citation>
    <scope>IDENTIFICATION IN THE EIF-3 COMPLEX</scope>
    <scope>IDENTIFICATION BY MASS SPECTROMETRY</scope>
</reference>
<feature type="chain" id="PRO_0000123524" description="Eukaryotic translation initiation factor 3 subunit D">
    <location>
        <begin position="1"/>
        <end position="567"/>
    </location>
</feature>
<feature type="region of interest" description="Disordered" evidence="3">
    <location>
        <begin position="12"/>
        <end position="34"/>
    </location>
</feature>
<feature type="region of interest" description="Disordered" evidence="3">
    <location>
        <begin position="122"/>
        <end position="160"/>
    </location>
</feature>
<feature type="region of interest" description="RNA gate" evidence="1">
    <location>
        <begin position="300"/>
        <end position="314"/>
    </location>
</feature>
<feature type="compositionally biased region" description="Gly residues" evidence="3">
    <location>
        <begin position="128"/>
        <end position="142"/>
    </location>
</feature>
<feature type="sequence conflict" description="In Ref. 2; CAA22586." evidence="7" ref="2">
    <original>Q</original>
    <variation>E</variation>
    <location>
        <position position="367"/>
    </location>
</feature>
<accession>O94236</accession>
<organism>
    <name type="scientific">Schizosaccharomyces pombe (strain 972 / ATCC 24843)</name>
    <name type="common">Fission yeast</name>
    <dbReference type="NCBI Taxonomy" id="284812"/>
    <lineage>
        <taxon>Eukaryota</taxon>
        <taxon>Fungi</taxon>
        <taxon>Dikarya</taxon>
        <taxon>Ascomycota</taxon>
        <taxon>Taphrinomycotina</taxon>
        <taxon>Schizosaccharomycetes</taxon>
        <taxon>Schizosaccharomycetales</taxon>
        <taxon>Schizosaccharomycetaceae</taxon>
        <taxon>Schizosaccharomyces</taxon>
    </lineage>
</organism>
<dbReference type="EMBL" id="AF038568">
    <property type="protein sequence ID" value="AAD08893.1"/>
    <property type="molecule type" value="Genomic_DNA"/>
</dbReference>
<dbReference type="EMBL" id="CU329670">
    <property type="protein sequence ID" value="CAA22586.1"/>
    <property type="molecule type" value="Genomic_DNA"/>
</dbReference>
<dbReference type="PIR" id="T43555">
    <property type="entry name" value="T43555"/>
</dbReference>
<dbReference type="RefSeq" id="NP_594625.1">
    <property type="nucleotide sequence ID" value="NM_001020053.2"/>
</dbReference>
<dbReference type="SMR" id="O94236"/>
<dbReference type="FunCoup" id="O94236">
    <property type="interactions" value="926"/>
</dbReference>
<dbReference type="IntAct" id="O94236">
    <property type="interactions" value="1"/>
</dbReference>
<dbReference type="MINT" id="O94236"/>
<dbReference type="STRING" id="284812.O94236"/>
<dbReference type="iPTMnet" id="O94236"/>
<dbReference type="PaxDb" id="4896-SPAC637.07.1"/>
<dbReference type="GeneID" id="2543412"/>
<dbReference type="KEGG" id="spo:2543412"/>
<dbReference type="PomBase" id="SPAC637.07">
    <property type="gene designation" value="moe1"/>
</dbReference>
<dbReference type="eggNOG" id="KOG2479">
    <property type="taxonomic scope" value="Eukaryota"/>
</dbReference>
<dbReference type="HOGENOM" id="CLU_024521_2_0_1"/>
<dbReference type="InParanoid" id="O94236"/>
<dbReference type="PhylomeDB" id="O94236"/>
<dbReference type="Reactome" id="R-SPO-156827">
    <property type="pathway name" value="L13a-mediated translational silencing of Ceruloplasmin expression"/>
</dbReference>
<dbReference type="Reactome" id="R-SPO-72649">
    <property type="pathway name" value="Translation initiation complex formation"/>
</dbReference>
<dbReference type="Reactome" id="R-SPO-72689">
    <property type="pathway name" value="Formation of a pool of free 40S subunits"/>
</dbReference>
<dbReference type="Reactome" id="R-SPO-72695">
    <property type="pathway name" value="Formation of the ternary complex, and subsequently, the 43S complex"/>
</dbReference>
<dbReference type="Reactome" id="R-SPO-72702">
    <property type="pathway name" value="Ribosomal scanning and start codon recognition"/>
</dbReference>
<dbReference type="Reactome" id="R-SPO-72706">
    <property type="pathway name" value="GTP hydrolysis and joining of the 60S ribosomal subunit"/>
</dbReference>
<dbReference type="PRO" id="PR:O94236"/>
<dbReference type="Proteomes" id="UP000002485">
    <property type="component" value="Chromosome I"/>
</dbReference>
<dbReference type="GO" id="GO:0010494">
    <property type="term" value="C:cytoplasmic stress granule"/>
    <property type="evidence" value="ECO:0000269"/>
    <property type="project" value="PomBase"/>
</dbReference>
<dbReference type="GO" id="GO:0005829">
    <property type="term" value="C:cytosol"/>
    <property type="evidence" value="ECO:0000314"/>
    <property type="project" value="PomBase"/>
</dbReference>
<dbReference type="GO" id="GO:0016282">
    <property type="term" value="C:eukaryotic 43S preinitiation complex"/>
    <property type="evidence" value="ECO:0000314"/>
    <property type="project" value="PomBase"/>
</dbReference>
<dbReference type="GO" id="GO:0033290">
    <property type="term" value="C:eukaryotic 48S preinitiation complex"/>
    <property type="evidence" value="ECO:0007669"/>
    <property type="project" value="UniProtKB-UniRule"/>
</dbReference>
<dbReference type="GO" id="GO:0005852">
    <property type="term" value="C:eukaryotic translation initiation factor 3 complex"/>
    <property type="evidence" value="ECO:0000318"/>
    <property type="project" value="GO_Central"/>
</dbReference>
<dbReference type="GO" id="GO:0071540">
    <property type="term" value="C:eukaryotic translation initiation factor 3 complex, eIF3e"/>
    <property type="evidence" value="ECO:0000314"/>
    <property type="project" value="PomBase"/>
</dbReference>
<dbReference type="GO" id="GO:0071541">
    <property type="term" value="C:eukaryotic translation initiation factor 3 complex, eIF3m"/>
    <property type="evidence" value="ECO:0000314"/>
    <property type="project" value="PomBase"/>
</dbReference>
<dbReference type="GO" id="GO:0098808">
    <property type="term" value="F:mRNA cap binding"/>
    <property type="evidence" value="ECO:0007669"/>
    <property type="project" value="UniProtKB-UniRule"/>
</dbReference>
<dbReference type="GO" id="GO:0003743">
    <property type="term" value="F:translation initiation factor activity"/>
    <property type="evidence" value="ECO:0000318"/>
    <property type="project" value="GO_Central"/>
</dbReference>
<dbReference type="GO" id="GO:0002191">
    <property type="term" value="P:cap-dependent translational initiation"/>
    <property type="evidence" value="ECO:0007669"/>
    <property type="project" value="UniProtKB-UniRule"/>
</dbReference>
<dbReference type="GO" id="GO:0001732">
    <property type="term" value="P:formation of cytoplasmic translation initiation complex"/>
    <property type="evidence" value="ECO:0000305"/>
    <property type="project" value="PomBase"/>
</dbReference>
<dbReference type="GO" id="GO:0006413">
    <property type="term" value="P:translational initiation"/>
    <property type="evidence" value="ECO:0000318"/>
    <property type="project" value="GO_Central"/>
</dbReference>
<dbReference type="HAMAP" id="MF_03003">
    <property type="entry name" value="eIF3d"/>
    <property type="match status" value="1"/>
</dbReference>
<dbReference type="InterPro" id="IPR007783">
    <property type="entry name" value="eIF3d"/>
</dbReference>
<dbReference type="PANTHER" id="PTHR12399">
    <property type="entry name" value="EUKARYOTIC TRANSLATION INITIATION FACTOR 3 SUBUNIT 7"/>
    <property type="match status" value="1"/>
</dbReference>
<dbReference type="PANTHER" id="PTHR12399:SF0">
    <property type="entry name" value="EUKARYOTIC TRANSLATION INITIATION FACTOR 3 SUBUNIT D"/>
    <property type="match status" value="1"/>
</dbReference>
<dbReference type="Pfam" id="PF05091">
    <property type="entry name" value="eIF-3_zeta"/>
    <property type="match status" value="1"/>
</dbReference>
<dbReference type="PIRSF" id="PIRSF016281">
    <property type="entry name" value="EIF-3_zeta"/>
    <property type="match status" value="1"/>
</dbReference>
<name>EIF3D_SCHPO</name>
<keyword id="KW-0963">Cytoplasm</keyword>
<keyword id="KW-0396">Initiation factor</keyword>
<keyword id="KW-0648">Protein biosynthesis</keyword>
<keyword id="KW-1185">Reference proteome</keyword>
<keyword id="KW-0694">RNA-binding</keyword>
<protein>
    <recommendedName>
        <fullName evidence="2">Eukaryotic translation initiation factor 3 subunit D</fullName>
        <shortName evidence="2">eIF3d</shortName>
    </recommendedName>
    <alternativeName>
        <fullName>Microtubule-destabilizing protein moe1</fullName>
    </alternativeName>
</protein>
<sequence length="567" mass="62636">MATGFKLPELAPVKSAWGPPETEQIGGDIPYAPFSKGDRLGKIADWSVDQPKDGREQRGRQGAFAGRFRDQYQTYGYGASSIFGYQHSEDESSFSVIDRGSVNRTRTSARNGGTLLKVRGRGQNVQRGGRGGRYGSSGGRGAGDTVVSRSSGAGGARGRRFGWKDYDKHQRLRNASVTVGDDWQLLDEVEFSHLSKLNLAAAAPVTVDSYGYIYPYDKSFDKIHVKSEKPLQALDRVHYNPTTTEDPVIQKLALNSDANIFITDSILSLLMCSTRSVYPWDIVITHQSGKLFFDKREGGPFDYLTVNENAYDSPMDADNREGVNSPGALSVEATYINQNFCVQALRETEEEKYKLPHPNPFYNSKEQSEPLAAHGYIYRDVDLSLETDEKPVKLMVRTEVDGYVKNPANDVQYISIKALNEYDPKFTNVTGSVDWRSKLESQRGAVFATEMKNNSCKLARWTVEALLAGVDSMKVGFVSRSNARDAQHHGILGVVAYKPADLASQMNLSLSNGWGIVRTIADVCLKMPDGKYVLVKDPNRPILRLYSVPPNTFEEAAGPSLEASSTA</sequence>
<gene>
    <name type="primary">moe1</name>
    <name type="synonym">eif3d</name>
    <name type="ORF">SPAC637.07</name>
</gene>